<name>ISPD_PSEA6</name>
<protein>
    <recommendedName>
        <fullName evidence="1">2-C-methyl-D-erythritol 4-phosphate cytidylyltransferase</fullName>
        <ecNumber evidence="1">2.7.7.60</ecNumber>
    </recommendedName>
    <alternativeName>
        <fullName evidence="1">4-diphosphocytidyl-2C-methyl-D-erythritol synthase</fullName>
    </alternativeName>
    <alternativeName>
        <fullName evidence="1">MEP cytidylyltransferase</fullName>
        <shortName evidence="1">MCT</shortName>
    </alternativeName>
</protein>
<reference key="1">
    <citation type="submission" date="2006-06" db="EMBL/GenBank/DDBJ databases">
        <title>Complete sequence of Pseudoalteromonas atlantica T6c.</title>
        <authorList>
            <consortium name="US DOE Joint Genome Institute"/>
            <person name="Copeland A."/>
            <person name="Lucas S."/>
            <person name="Lapidus A."/>
            <person name="Barry K."/>
            <person name="Detter J.C."/>
            <person name="Glavina del Rio T."/>
            <person name="Hammon N."/>
            <person name="Israni S."/>
            <person name="Dalin E."/>
            <person name="Tice H."/>
            <person name="Pitluck S."/>
            <person name="Saunders E."/>
            <person name="Brettin T."/>
            <person name="Bruce D."/>
            <person name="Han C."/>
            <person name="Tapia R."/>
            <person name="Gilna P."/>
            <person name="Schmutz J."/>
            <person name="Larimer F."/>
            <person name="Land M."/>
            <person name="Hauser L."/>
            <person name="Kyrpides N."/>
            <person name="Kim E."/>
            <person name="Karls A.C."/>
            <person name="Bartlett D."/>
            <person name="Higgins B.P."/>
            <person name="Richardson P."/>
        </authorList>
    </citation>
    <scope>NUCLEOTIDE SEQUENCE [LARGE SCALE GENOMIC DNA]</scope>
    <source>
        <strain>T6c / ATCC BAA-1087</strain>
    </source>
</reference>
<organism>
    <name type="scientific">Pseudoalteromonas atlantica (strain T6c / ATCC BAA-1087)</name>
    <dbReference type="NCBI Taxonomy" id="3042615"/>
    <lineage>
        <taxon>Bacteria</taxon>
        <taxon>Pseudomonadati</taxon>
        <taxon>Pseudomonadota</taxon>
        <taxon>Gammaproteobacteria</taxon>
        <taxon>Alteromonadales</taxon>
        <taxon>Alteromonadaceae</taxon>
        <taxon>Paraglaciecola</taxon>
    </lineage>
</organism>
<evidence type="ECO:0000255" key="1">
    <source>
        <dbReference type="HAMAP-Rule" id="MF_00108"/>
    </source>
</evidence>
<comment type="function">
    <text evidence="1">Catalyzes the formation of 4-diphosphocytidyl-2-C-methyl-D-erythritol from CTP and 2-C-methyl-D-erythritol 4-phosphate (MEP).</text>
</comment>
<comment type="catalytic activity">
    <reaction evidence="1">
        <text>2-C-methyl-D-erythritol 4-phosphate + CTP + H(+) = 4-CDP-2-C-methyl-D-erythritol + diphosphate</text>
        <dbReference type="Rhea" id="RHEA:13429"/>
        <dbReference type="ChEBI" id="CHEBI:15378"/>
        <dbReference type="ChEBI" id="CHEBI:33019"/>
        <dbReference type="ChEBI" id="CHEBI:37563"/>
        <dbReference type="ChEBI" id="CHEBI:57823"/>
        <dbReference type="ChEBI" id="CHEBI:58262"/>
        <dbReference type="EC" id="2.7.7.60"/>
    </reaction>
</comment>
<comment type="pathway">
    <text evidence="1">Isoprenoid biosynthesis; isopentenyl diphosphate biosynthesis via DXP pathway; isopentenyl diphosphate from 1-deoxy-D-xylulose 5-phosphate: step 2/6.</text>
</comment>
<comment type="similarity">
    <text evidence="1">Belongs to the IspD/TarI cytidylyltransferase family. IspD subfamily.</text>
</comment>
<proteinExistence type="inferred from homology"/>
<dbReference type="EC" id="2.7.7.60" evidence="1"/>
<dbReference type="EMBL" id="CP000388">
    <property type="protein sequence ID" value="ABG42357.1"/>
    <property type="molecule type" value="Genomic_DNA"/>
</dbReference>
<dbReference type="RefSeq" id="WP_011576565.1">
    <property type="nucleotide sequence ID" value="NC_008228.1"/>
</dbReference>
<dbReference type="SMR" id="Q15P31"/>
<dbReference type="STRING" id="342610.Patl_3857"/>
<dbReference type="KEGG" id="pat:Patl_3857"/>
<dbReference type="eggNOG" id="COG1211">
    <property type="taxonomic scope" value="Bacteria"/>
</dbReference>
<dbReference type="HOGENOM" id="CLU_061281_3_1_6"/>
<dbReference type="OrthoDB" id="9806837at2"/>
<dbReference type="UniPathway" id="UPA00056">
    <property type="reaction ID" value="UER00093"/>
</dbReference>
<dbReference type="Proteomes" id="UP000001981">
    <property type="component" value="Chromosome"/>
</dbReference>
<dbReference type="GO" id="GO:0050518">
    <property type="term" value="F:2-C-methyl-D-erythritol 4-phosphate cytidylyltransferase activity"/>
    <property type="evidence" value="ECO:0007669"/>
    <property type="project" value="UniProtKB-UniRule"/>
</dbReference>
<dbReference type="GO" id="GO:0019288">
    <property type="term" value="P:isopentenyl diphosphate biosynthetic process, methylerythritol 4-phosphate pathway"/>
    <property type="evidence" value="ECO:0007669"/>
    <property type="project" value="UniProtKB-UniRule"/>
</dbReference>
<dbReference type="CDD" id="cd02516">
    <property type="entry name" value="CDP-ME_synthetase"/>
    <property type="match status" value="1"/>
</dbReference>
<dbReference type="FunFam" id="3.90.550.10:FF:000003">
    <property type="entry name" value="2-C-methyl-D-erythritol 4-phosphate cytidylyltransferase"/>
    <property type="match status" value="1"/>
</dbReference>
<dbReference type="Gene3D" id="3.90.550.10">
    <property type="entry name" value="Spore Coat Polysaccharide Biosynthesis Protein SpsA, Chain A"/>
    <property type="match status" value="1"/>
</dbReference>
<dbReference type="HAMAP" id="MF_00108">
    <property type="entry name" value="IspD"/>
    <property type="match status" value="1"/>
</dbReference>
<dbReference type="InterPro" id="IPR001228">
    <property type="entry name" value="IspD"/>
</dbReference>
<dbReference type="InterPro" id="IPR034683">
    <property type="entry name" value="IspD/TarI"/>
</dbReference>
<dbReference type="InterPro" id="IPR050088">
    <property type="entry name" value="IspD/TarI_cytidylyltransf_bact"/>
</dbReference>
<dbReference type="InterPro" id="IPR018294">
    <property type="entry name" value="ISPD_synthase_CS"/>
</dbReference>
<dbReference type="InterPro" id="IPR029044">
    <property type="entry name" value="Nucleotide-diphossugar_trans"/>
</dbReference>
<dbReference type="NCBIfam" id="TIGR00453">
    <property type="entry name" value="ispD"/>
    <property type="match status" value="1"/>
</dbReference>
<dbReference type="PANTHER" id="PTHR32125">
    <property type="entry name" value="2-C-METHYL-D-ERYTHRITOL 4-PHOSPHATE CYTIDYLYLTRANSFERASE, CHLOROPLASTIC"/>
    <property type="match status" value="1"/>
</dbReference>
<dbReference type="PANTHER" id="PTHR32125:SF4">
    <property type="entry name" value="2-C-METHYL-D-ERYTHRITOL 4-PHOSPHATE CYTIDYLYLTRANSFERASE, CHLOROPLASTIC"/>
    <property type="match status" value="1"/>
</dbReference>
<dbReference type="Pfam" id="PF01128">
    <property type="entry name" value="IspD"/>
    <property type="match status" value="1"/>
</dbReference>
<dbReference type="SUPFAM" id="SSF53448">
    <property type="entry name" value="Nucleotide-diphospho-sugar transferases"/>
    <property type="match status" value="1"/>
</dbReference>
<dbReference type="PROSITE" id="PS01295">
    <property type="entry name" value="ISPD"/>
    <property type="match status" value="1"/>
</dbReference>
<keyword id="KW-0414">Isoprene biosynthesis</keyword>
<keyword id="KW-0548">Nucleotidyltransferase</keyword>
<keyword id="KW-0808">Transferase</keyword>
<sequence>MSTAPLYTVVVPAAGIGQRMQADRPKQYLTIAGKTILEHTLENLYAHPQIEQIIVAINPLDQYFDSLPIASKTWVKRVDGGGERADSVLAGLNSLQNADWVLVHDAARPCLAQDDLSKLLATAEHSEHGAILACRVRDTMKRGNSSHDILHTESRDNLWHALTPQFFPLDALRSALGQAMAQGIEITDEASAIEWVQGKVHLVEGRSSNIKVTQPEDLHLAEFYLQHKATL</sequence>
<gene>
    <name evidence="1" type="primary">ispD</name>
    <name type="ordered locus">Patl_3857</name>
</gene>
<feature type="chain" id="PRO_1000071319" description="2-C-methyl-D-erythritol 4-phosphate cytidylyltransferase">
    <location>
        <begin position="1"/>
        <end position="231"/>
    </location>
</feature>
<feature type="site" description="Transition state stabilizer" evidence="1">
    <location>
        <position position="19"/>
    </location>
</feature>
<feature type="site" description="Transition state stabilizer" evidence="1">
    <location>
        <position position="26"/>
    </location>
</feature>
<feature type="site" description="Positions MEP for the nucleophilic attack" evidence="1">
    <location>
        <position position="155"/>
    </location>
</feature>
<feature type="site" description="Positions MEP for the nucleophilic attack" evidence="1">
    <location>
        <position position="211"/>
    </location>
</feature>
<accession>Q15P31</accession>